<reference key="1">
    <citation type="journal article" date="1995" name="Proc. Natl. Acad. Sci. U.S.A.">
        <title>Recent African origin of modern humans revealed by complete sequences of hominoid mitochondrial DNAs.</title>
        <authorList>
            <person name="Horai S."/>
            <person name="Hayasaka K."/>
            <person name="Kondo R."/>
            <person name="Tsugane K."/>
            <person name="Takahata N."/>
        </authorList>
    </citation>
    <scope>NUCLEOTIDE SEQUENCE [GENOMIC DNA]</scope>
</reference>
<reference key="2">
    <citation type="journal article" date="1996" name="J. Mol. Evol.">
        <title>Comparison between the complete mitochondrial DNA sequences of Homo and the common chimpanzee based on nonchimeric sequences.</title>
        <authorList>
            <person name="Arnason U."/>
            <person name="Xu X."/>
            <person name="Gullberg A."/>
        </authorList>
    </citation>
    <scope>NUCLEOTIDE SEQUENCE [GENOMIC DNA]</scope>
</reference>
<organism>
    <name type="scientific">Pan troglodytes</name>
    <name type="common">Chimpanzee</name>
    <dbReference type="NCBI Taxonomy" id="9598"/>
    <lineage>
        <taxon>Eukaryota</taxon>
        <taxon>Metazoa</taxon>
        <taxon>Chordata</taxon>
        <taxon>Craniata</taxon>
        <taxon>Vertebrata</taxon>
        <taxon>Euteleostomi</taxon>
        <taxon>Mammalia</taxon>
        <taxon>Eutheria</taxon>
        <taxon>Euarchontoglires</taxon>
        <taxon>Primates</taxon>
        <taxon>Haplorrhini</taxon>
        <taxon>Catarrhini</taxon>
        <taxon>Hominidae</taxon>
        <taxon>Pan</taxon>
    </lineage>
</organism>
<feature type="chain" id="PRO_0000118464" description="NADH-ubiquinone oxidoreductase chain 4L">
    <location>
        <begin position="1"/>
        <end position="98"/>
    </location>
</feature>
<feature type="transmembrane region" description="Helical" evidence="3">
    <location>
        <begin position="1"/>
        <end position="21"/>
    </location>
</feature>
<feature type="transmembrane region" description="Helical" evidence="3">
    <location>
        <begin position="29"/>
        <end position="49"/>
    </location>
</feature>
<feature type="transmembrane region" description="Helical" evidence="3">
    <location>
        <begin position="58"/>
        <end position="78"/>
    </location>
</feature>
<keyword id="KW-0249">Electron transport</keyword>
<keyword id="KW-0472">Membrane</keyword>
<keyword id="KW-0496">Mitochondrion</keyword>
<keyword id="KW-0999">Mitochondrion inner membrane</keyword>
<keyword id="KW-0520">NAD</keyword>
<keyword id="KW-1185">Reference proteome</keyword>
<keyword id="KW-0679">Respiratory chain</keyword>
<keyword id="KW-1278">Translocase</keyword>
<keyword id="KW-0812">Transmembrane</keyword>
<keyword id="KW-1133">Transmembrane helix</keyword>
<keyword id="KW-0813">Transport</keyword>
<keyword id="KW-0830">Ubiquinone</keyword>
<name>NU4LM_PANTR</name>
<protein>
    <recommendedName>
        <fullName>NADH-ubiquinone oxidoreductase chain 4L</fullName>
        <ecNumber>7.1.1.2</ecNumber>
    </recommendedName>
    <alternativeName>
        <fullName>NADH dehydrogenase subunit 4L</fullName>
    </alternativeName>
</protein>
<evidence type="ECO:0000250" key="1">
    <source>
        <dbReference type="UniProtKB" id="P03901"/>
    </source>
</evidence>
<evidence type="ECO:0000250" key="2">
    <source>
        <dbReference type="UniProtKB" id="P03902"/>
    </source>
</evidence>
<evidence type="ECO:0000255" key="3"/>
<evidence type="ECO:0000305" key="4"/>
<sequence>MPLIYMNIMLAFTISLLGMLVYRSHLMSSLLCLEGMMLSLFIMATLMTLNTHSLLANIVPITMLVFAACEAAVGLALLVSISNTYGLDYVHNLNLLQC</sequence>
<proteinExistence type="inferred from homology"/>
<comment type="function">
    <text evidence="1">Core subunit of the mitochondrial membrane respiratory chain NADH dehydrogenase (Complex I) which catalyzes electron transfer from NADH through the respiratory chain, using ubiquinone as an electron acceptor. Part of the enzyme membrane arm which is embedded in the lipid bilayer and involved in proton translocation.</text>
</comment>
<comment type="catalytic activity">
    <reaction evidence="1">
        <text>a ubiquinone + NADH + 5 H(+)(in) = a ubiquinol + NAD(+) + 4 H(+)(out)</text>
        <dbReference type="Rhea" id="RHEA:29091"/>
        <dbReference type="Rhea" id="RHEA-COMP:9565"/>
        <dbReference type="Rhea" id="RHEA-COMP:9566"/>
        <dbReference type="ChEBI" id="CHEBI:15378"/>
        <dbReference type="ChEBI" id="CHEBI:16389"/>
        <dbReference type="ChEBI" id="CHEBI:17976"/>
        <dbReference type="ChEBI" id="CHEBI:57540"/>
        <dbReference type="ChEBI" id="CHEBI:57945"/>
        <dbReference type="EC" id="7.1.1.2"/>
    </reaction>
    <physiologicalReaction direction="left-to-right" evidence="1">
        <dbReference type="Rhea" id="RHEA:29092"/>
    </physiologicalReaction>
</comment>
<comment type="subunit">
    <text evidence="2">Core subunit of respiratory chain NADH dehydrogenase (Complex I) which is composed of 45 different subunits.</text>
</comment>
<comment type="subcellular location">
    <subcellularLocation>
        <location evidence="2">Mitochondrion inner membrane</location>
        <topology evidence="3">Multi-pass membrane protein</topology>
    </subcellularLocation>
</comment>
<comment type="similarity">
    <text evidence="4">Belongs to the complex I subunit 4L family.</text>
</comment>
<gene>
    <name type="primary">MT-ND4L</name>
    <name type="synonym">MTND4L</name>
    <name type="synonym">NADH4L</name>
    <name type="synonym">ND4L</name>
</gene>
<dbReference type="EC" id="7.1.1.2"/>
<dbReference type="EMBL" id="D38113">
    <property type="protein sequence ID" value="BAA07301.1"/>
    <property type="molecule type" value="Genomic_DNA"/>
</dbReference>
<dbReference type="EMBL" id="X93335">
    <property type="protein sequence ID" value="CAA63722.1"/>
    <property type="molecule type" value="Genomic_DNA"/>
</dbReference>
<dbReference type="PIR" id="T14198">
    <property type="entry name" value="T14198"/>
</dbReference>
<dbReference type="RefSeq" id="NP_008194.1">
    <property type="nucleotide sequence ID" value="NC_001643.1"/>
</dbReference>
<dbReference type="SMR" id="Q37809"/>
<dbReference type="FunCoup" id="Q37809">
    <property type="interactions" value="268"/>
</dbReference>
<dbReference type="STRING" id="9598.ENSPTRP00000061409"/>
<dbReference type="PaxDb" id="9598-ENSPTRP00000061409"/>
<dbReference type="Ensembl" id="ENSPTRT00000076391.1">
    <property type="protein sequence ID" value="ENSPTRP00000061409.1"/>
    <property type="gene ID" value="ENSPTRG00000042631.1"/>
</dbReference>
<dbReference type="GeneID" id="807868"/>
<dbReference type="KEGG" id="ptr:807868"/>
<dbReference type="CTD" id="4539"/>
<dbReference type="VGNC" id="VGNC:11722">
    <property type="gene designation" value="MT-ND4L"/>
</dbReference>
<dbReference type="eggNOG" id="KOG4669">
    <property type="taxonomic scope" value="Eukaryota"/>
</dbReference>
<dbReference type="GeneTree" id="ENSGT00390000004755"/>
<dbReference type="HOGENOM" id="CLU_182394_0_0_1"/>
<dbReference type="InParanoid" id="Q37809"/>
<dbReference type="OMA" id="MYRSHLM"/>
<dbReference type="Proteomes" id="UP000002277">
    <property type="component" value="Mitochondrion"/>
</dbReference>
<dbReference type="Bgee" id="ENSPTRG00000042631">
    <property type="expression patterns" value="Expressed in cortex of kidney and 16 other cell types or tissues"/>
</dbReference>
<dbReference type="GO" id="GO:0005743">
    <property type="term" value="C:mitochondrial inner membrane"/>
    <property type="evidence" value="ECO:0000250"/>
    <property type="project" value="UniProtKB"/>
</dbReference>
<dbReference type="GO" id="GO:0045271">
    <property type="term" value="C:respiratory chain complex I"/>
    <property type="evidence" value="ECO:0000250"/>
    <property type="project" value="UniProtKB"/>
</dbReference>
<dbReference type="GO" id="GO:0008137">
    <property type="term" value="F:NADH dehydrogenase (ubiquinone) activity"/>
    <property type="evidence" value="ECO:0000250"/>
    <property type="project" value="UniProtKB"/>
</dbReference>
<dbReference type="GO" id="GO:0042773">
    <property type="term" value="P:ATP synthesis coupled electron transport"/>
    <property type="evidence" value="ECO:0007669"/>
    <property type="project" value="InterPro"/>
</dbReference>
<dbReference type="FunFam" id="1.10.287.3510:FF:000002">
    <property type="entry name" value="NADH-ubiquinone oxidoreductase chain 4L"/>
    <property type="match status" value="1"/>
</dbReference>
<dbReference type="Gene3D" id="1.10.287.3510">
    <property type="match status" value="1"/>
</dbReference>
<dbReference type="InterPro" id="IPR001133">
    <property type="entry name" value="NADH_UbQ_OxRdtase_chain4L/K"/>
</dbReference>
<dbReference type="InterPro" id="IPR039428">
    <property type="entry name" value="NUOK/Mnh_C1-like"/>
</dbReference>
<dbReference type="PANTHER" id="PTHR11434:SF0">
    <property type="entry name" value="NADH-UBIQUINONE OXIDOREDUCTASE CHAIN 4L"/>
    <property type="match status" value="1"/>
</dbReference>
<dbReference type="PANTHER" id="PTHR11434">
    <property type="entry name" value="NADH-UBIQUINONE OXIDOREDUCTASE SUBUNIT ND4L"/>
    <property type="match status" value="1"/>
</dbReference>
<dbReference type="Pfam" id="PF00420">
    <property type="entry name" value="Oxidored_q2"/>
    <property type="match status" value="1"/>
</dbReference>
<accession>Q37809</accession>
<geneLocation type="mitochondrion"/>